<organism>
    <name type="scientific">Gallus gallus</name>
    <name type="common">Chicken</name>
    <dbReference type="NCBI Taxonomy" id="9031"/>
    <lineage>
        <taxon>Eukaryota</taxon>
        <taxon>Metazoa</taxon>
        <taxon>Chordata</taxon>
        <taxon>Craniata</taxon>
        <taxon>Vertebrata</taxon>
        <taxon>Euteleostomi</taxon>
        <taxon>Archelosauria</taxon>
        <taxon>Archosauria</taxon>
        <taxon>Dinosauria</taxon>
        <taxon>Saurischia</taxon>
        <taxon>Theropoda</taxon>
        <taxon>Coelurosauria</taxon>
        <taxon>Aves</taxon>
        <taxon>Neognathae</taxon>
        <taxon>Galloanserae</taxon>
        <taxon>Galliformes</taxon>
        <taxon>Phasianidae</taxon>
        <taxon>Phasianinae</taxon>
        <taxon>Gallus</taxon>
    </lineage>
</organism>
<evidence type="ECO:0000255" key="1"/>
<evidence type="ECO:0000255" key="2">
    <source>
        <dbReference type="PROSITE-ProRule" id="PRU00521"/>
    </source>
</evidence>
<sequence>MGPLEAIGEENQTDEMKMELFTKLYLPRYTTPVSELALDPKPELKDSTTLVEVQIILIFAYCSIILLGVIGNSLVIHVIIKFKSMRTVTNFFIANLAVADLLVNTLCLPFTLVYTLLGEWKLGPVLCHLVPYAQALAVHVSTVTLTVIALDRHRCIVYHLESKISKRISFLIIGVAWAVSALLASPLAIFREYSLIEIIPDFKIVVCSEKWPGEGQLNYGTIYSVSMLLIQYVLPLAIISYAYTRIWTKLKNHVSPGAGNDHYHHRRQKTTKMLVCVVVVFAVSWLPFHAFQLVSDIDSQVLDLKEYKLIYTVFHVIAMCSTFANPLLYGWMNNNYRTAFLTAFQCEQRLDSIHPEVSAAFKARKKLEAKKSQFPGDSFTQPTNV</sequence>
<accession>Q9DDN6</accession>
<gene>
    <name type="primary">NPY2R</name>
</gene>
<keyword id="KW-1003">Cell membrane</keyword>
<keyword id="KW-1015">Disulfide bond</keyword>
<keyword id="KW-0297">G-protein coupled receptor</keyword>
<keyword id="KW-0325">Glycoprotein</keyword>
<keyword id="KW-0449">Lipoprotein</keyword>
<keyword id="KW-0472">Membrane</keyword>
<keyword id="KW-0564">Palmitate</keyword>
<keyword id="KW-0597">Phosphoprotein</keyword>
<keyword id="KW-0675">Receptor</keyword>
<keyword id="KW-1185">Reference proteome</keyword>
<keyword id="KW-0807">Transducer</keyword>
<keyword id="KW-0812">Transmembrane</keyword>
<keyword id="KW-1133">Transmembrane helix</keyword>
<dbReference type="EMBL" id="AF309091">
    <property type="protein sequence ID" value="AAG37898.1"/>
    <property type="molecule type" value="Genomic_DNA"/>
</dbReference>
<dbReference type="RefSeq" id="NP_001026299.1">
    <property type="nucleotide sequence ID" value="NM_001031128.2"/>
</dbReference>
<dbReference type="RefSeq" id="NP_001385021.1">
    <property type="nucleotide sequence ID" value="NM_001398092.1"/>
</dbReference>
<dbReference type="RefSeq" id="XP_015140770.1">
    <property type="nucleotide sequence ID" value="XM_015285284.1"/>
</dbReference>
<dbReference type="RefSeq" id="XP_015140771.1">
    <property type="nucleotide sequence ID" value="XM_015285285.1"/>
</dbReference>
<dbReference type="SMR" id="Q9DDN6"/>
<dbReference type="FunCoup" id="Q9DDN6">
    <property type="interactions" value="154"/>
</dbReference>
<dbReference type="STRING" id="9031.ENSGALP00000072258"/>
<dbReference type="GlyCosmos" id="Q9DDN6">
    <property type="glycosylation" value="1 site, No reported glycans"/>
</dbReference>
<dbReference type="GlyGen" id="Q9DDN6">
    <property type="glycosylation" value="1 site"/>
</dbReference>
<dbReference type="PaxDb" id="9031-ENSGALP00000015084"/>
<dbReference type="Ensembl" id="ENSGALT00010036194.1">
    <property type="protein sequence ID" value="ENSGALP00010021038.1"/>
    <property type="gene ID" value="ENSGALG00010015047.1"/>
</dbReference>
<dbReference type="Ensembl" id="ENSGALT00010036202.1">
    <property type="protein sequence ID" value="ENSGALP00010021044.1"/>
    <property type="gene ID" value="ENSGALG00010015047.1"/>
</dbReference>
<dbReference type="Ensembl" id="ENSGALT00010036204.1">
    <property type="protein sequence ID" value="ENSGALP00010021045.1"/>
    <property type="gene ID" value="ENSGALG00010015047.1"/>
</dbReference>
<dbReference type="Ensembl" id="ENSGALT00010036207.1">
    <property type="protein sequence ID" value="ENSGALP00010021047.1"/>
    <property type="gene ID" value="ENSGALG00010015047.1"/>
</dbReference>
<dbReference type="GeneID" id="422405"/>
<dbReference type="KEGG" id="gga:422405"/>
<dbReference type="CTD" id="4887"/>
<dbReference type="VEuPathDB" id="HostDB:geneid_422405"/>
<dbReference type="eggNOG" id="KOG3656">
    <property type="taxonomic scope" value="Eukaryota"/>
</dbReference>
<dbReference type="GeneTree" id="ENSGT00940000155973"/>
<dbReference type="HOGENOM" id="CLU_009579_6_1_1"/>
<dbReference type="InParanoid" id="Q9DDN6"/>
<dbReference type="OMA" id="WPGKNTD"/>
<dbReference type="OrthoDB" id="9046662at2759"/>
<dbReference type="PhylomeDB" id="Q9DDN6"/>
<dbReference type="TreeFam" id="TF315303"/>
<dbReference type="Reactome" id="R-GGA-375276">
    <property type="pathway name" value="Peptide ligand-binding receptors"/>
</dbReference>
<dbReference type="Reactome" id="R-GGA-418594">
    <property type="pathway name" value="G alpha (i) signalling events"/>
</dbReference>
<dbReference type="PRO" id="PR:Q9DDN6"/>
<dbReference type="Proteomes" id="UP000000539">
    <property type="component" value="Chromosome 4"/>
</dbReference>
<dbReference type="Bgee" id="ENSGALG00000009280">
    <property type="expression patterns" value="Expressed in brain and 4 other cell types or tissues"/>
</dbReference>
<dbReference type="GO" id="GO:0097730">
    <property type="term" value="C:non-motile cilium"/>
    <property type="evidence" value="ECO:0007669"/>
    <property type="project" value="Ensembl"/>
</dbReference>
<dbReference type="GO" id="GO:0005886">
    <property type="term" value="C:plasma membrane"/>
    <property type="evidence" value="ECO:0007669"/>
    <property type="project" value="UniProtKB-SubCell"/>
</dbReference>
<dbReference type="GO" id="GO:0001601">
    <property type="term" value="F:peptide YY receptor activity"/>
    <property type="evidence" value="ECO:0007669"/>
    <property type="project" value="Ensembl"/>
</dbReference>
<dbReference type="GO" id="GO:0007193">
    <property type="term" value="P:adenylate cyclase-inhibiting G protein-coupled receptor signaling pathway"/>
    <property type="evidence" value="ECO:0007669"/>
    <property type="project" value="Ensembl"/>
</dbReference>
<dbReference type="GO" id="GO:0003214">
    <property type="term" value="P:cardiac left ventricle morphogenesis"/>
    <property type="evidence" value="ECO:0007669"/>
    <property type="project" value="Ensembl"/>
</dbReference>
<dbReference type="GO" id="GO:0003151">
    <property type="term" value="P:outflow tract morphogenesis"/>
    <property type="evidence" value="ECO:0007669"/>
    <property type="project" value="Ensembl"/>
</dbReference>
<dbReference type="CDD" id="cd15399">
    <property type="entry name" value="7tmA_NPY2R"/>
    <property type="match status" value="1"/>
</dbReference>
<dbReference type="FunFam" id="1.20.1070.10:FF:000158">
    <property type="entry name" value="Neuropeptide Y receptor type 2"/>
    <property type="match status" value="1"/>
</dbReference>
<dbReference type="Gene3D" id="1.20.1070.10">
    <property type="entry name" value="Rhodopsin 7-helix transmembrane proteins"/>
    <property type="match status" value="1"/>
</dbReference>
<dbReference type="InterPro" id="IPR000276">
    <property type="entry name" value="GPCR_Rhodpsn"/>
</dbReference>
<dbReference type="InterPro" id="IPR017452">
    <property type="entry name" value="GPCR_Rhodpsn_7TM"/>
</dbReference>
<dbReference type="InterPro" id="IPR001358">
    <property type="entry name" value="NPY2_rcpt"/>
</dbReference>
<dbReference type="InterPro" id="IPR000611">
    <property type="entry name" value="NPY_rcpt"/>
</dbReference>
<dbReference type="PANTHER" id="PTHR24235">
    <property type="entry name" value="NEUROPEPTIDE Y RECEPTOR"/>
    <property type="match status" value="1"/>
</dbReference>
<dbReference type="PANTHER" id="PTHR24235:SF20">
    <property type="entry name" value="NEUROPEPTIDE Y RECEPTOR TYPE 2"/>
    <property type="match status" value="1"/>
</dbReference>
<dbReference type="Pfam" id="PF00001">
    <property type="entry name" value="7tm_1"/>
    <property type="match status" value="1"/>
</dbReference>
<dbReference type="PRINTS" id="PR00237">
    <property type="entry name" value="GPCRRHODOPSN"/>
</dbReference>
<dbReference type="PRINTS" id="PR01014">
    <property type="entry name" value="NRPEPTIDEY2R"/>
</dbReference>
<dbReference type="PRINTS" id="PR01012">
    <property type="entry name" value="NRPEPTIDEYR"/>
</dbReference>
<dbReference type="SMART" id="SM01381">
    <property type="entry name" value="7TM_GPCR_Srsx"/>
    <property type="match status" value="1"/>
</dbReference>
<dbReference type="SUPFAM" id="SSF81321">
    <property type="entry name" value="Family A G protein-coupled receptor-like"/>
    <property type="match status" value="1"/>
</dbReference>
<dbReference type="PROSITE" id="PS00237">
    <property type="entry name" value="G_PROTEIN_RECEP_F1_1"/>
    <property type="match status" value="1"/>
</dbReference>
<dbReference type="PROSITE" id="PS50262">
    <property type="entry name" value="G_PROTEIN_RECEP_F1_2"/>
    <property type="match status" value="1"/>
</dbReference>
<protein>
    <recommendedName>
        <fullName>Neuropeptide Y receptor type 2</fullName>
        <shortName>NPY2-R</shortName>
    </recommendedName>
    <alternativeName>
        <fullName>NPY-Y2 receptor</fullName>
        <shortName>Y2 receptor</shortName>
    </alternativeName>
</protein>
<proteinExistence type="inferred from homology"/>
<feature type="chain" id="PRO_0000069934" description="Neuropeptide Y receptor type 2">
    <location>
        <begin position="1"/>
        <end position="385"/>
    </location>
</feature>
<feature type="topological domain" description="Extracellular" evidence="1">
    <location>
        <begin position="1"/>
        <end position="54"/>
    </location>
</feature>
<feature type="transmembrane region" description="Helical; Name=1" evidence="1">
    <location>
        <begin position="55"/>
        <end position="75"/>
    </location>
</feature>
<feature type="topological domain" description="Cytoplasmic" evidence="1">
    <location>
        <begin position="76"/>
        <end position="90"/>
    </location>
</feature>
<feature type="transmembrane region" description="Helical; Name=2" evidence="1">
    <location>
        <begin position="91"/>
        <end position="111"/>
    </location>
</feature>
<feature type="topological domain" description="Extracellular" evidence="1">
    <location>
        <begin position="112"/>
        <end position="128"/>
    </location>
</feature>
<feature type="transmembrane region" description="Helical; Name=3" evidence="1">
    <location>
        <begin position="129"/>
        <end position="149"/>
    </location>
</feature>
<feature type="topological domain" description="Cytoplasmic" evidence="1">
    <location>
        <begin position="150"/>
        <end position="169"/>
    </location>
</feature>
<feature type="transmembrane region" description="Helical; Name=4" evidence="1">
    <location>
        <begin position="170"/>
        <end position="190"/>
    </location>
</feature>
<feature type="topological domain" description="Extracellular" evidence="1">
    <location>
        <begin position="191"/>
        <end position="221"/>
    </location>
</feature>
<feature type="transmembrane region" description="Helical; Name=5" evidence="1">
    <location>
        <begin position="222"/>
        <end position="242"/>
    </location>
</feature>
<feature type="topological domain" description="Cytoplasmic" evidence="1">
    <location>
        <begin position="243"/>
        <end position="273"/>
    </location>
</feature>
<feature type="transmembrane region" description="Helical; Name=6" evidence="1">
    <location>
        <begin position="274"/>
        <end position="294"/>
    </location>
</feature>
<feature type="topological domain" description="Extracellular" evidence="1">
    <location>
        <begin position="295"/>
        <end position="308"/>
    </location>
</feature>
<feature type="transmembrane region" description="Helical; Name=7" evidence="1">
    <location>
        <begin position="309"/>
        <end position="329"/>
    </location>
</feature>
<feature type="topological domain" description="Cytoplasmic" evidence="1">
    <location>
        <begin position="330"/>
        <end position="385"/>
    </location>
</feature>
<feature type="lipid moiety-binding region" description="S-palmitoyl cysteine" evidence="1">
    <location>
        <position position="346"/>
    </location>
</feature>
<feature type="glycosylation site" description="N-linked (GlcNAc...) asparagine" evidence="1">
    <location>
        <position position="11"/>
    </location>
</feature>
<feature type="disulfide bond" evidence="2">
    <location>
        <begin position="127"/>
        <end position="207"/>
    </location>
</feature>
<reference key="1">
    <citation type="journal article" date="2000" name="FEBS Lett.">
        <title>Chicken neuropeptide Y receptor Y2: structural and pharmacological differences to mammalian Y2.</title>
        <authorList>
            <person name="Salaneck E."/>
            <person name="Holmberg S.K."/>
            <person name="Berglund M.M."/>
            <person name="Boswell T."/>
            <person name="Larhammar D."/>
        </authorList>
    </citation>
    <scope>NUCLEOTIDE SEQUENCE [GENOMIC DNA]</scope>
</reference>
<name>NPY2R_CHICK</name>
<comment type="function">
    <text>Receptor for neuropeptide Y and peptide YY.</text>
</comment>
<comment type="subcellular location">
    <subcellularLocation>
        <location>Cell membrane</location>
        <topology>Multi-pass membrane protein</topology>
    </subcellularLocation>
</comment>
<comment type="similarity">
    <text evidence="2">Belongs to the G-protein coupled receptor 1 family.</text>
</comment>